<name>LALBA_NOTRU</name>
<feature type="chain" id="PRO_0000208839" description="Alpha-lactalbumin">
    <location>
        <begin position="1"/>
        <end position="121"/>
    </location>
</feature>
<feature type="domain" description="C-type lysozyme" evidence="3">
    <location>
        <begin position="1"/>
        <end position="121"/>
    </location>
</feature>
<feature type="binding site" evidence="1">
    <location>
        <position position="79"/>
    </location>
    <ligand>
        <name>Ca(2+)</name>
        <dbReference type="ChEBI" id="CHEBI:29108"/>
    </ligand>
</feature>
<feature type="binding site" evidence="1">
    <location>
        <position position="82"/>
    </location>
    <ligand>
        <name>Ca(2+)</name>
        <dbReference type="ChEBI" id="CHEBI:29108"/>
    </ligand>
</feature>
<feature type="binding site" evidence="1">
    <location>
        <position position="84"/>
    </location>
    <ligand>
        <name>Ca(2+)</name>
        <dbReference type="ChEBI" id="CHEBI:29108"/>
    </ligand>
</feature>
<feature type="binding site" evidence="1">
    <location>
        <position position="87"/>
    </location>
    <ligand>
        <name>Ca(2+)</name>
        <dbReference type="ChEBI" id="CHEBI:29108"/>
    </ligand>
</feature>
<feature type="binding site" evidence="1">
    <location>
        <position position="88"/>
    </location>
    <ligand>
        <name>Ca(2+)</name>
        <dbReference type="ChEBI" id="CHEBI:29108"/>
    </ligand>
</feature>
<feature type="glycosylation site" description="N-linked (GlcNAc...) asparagine" evidence="2">
    <location>
        <position position="44"/>
    </location>
</feature>
<feature type="disulfide bond" evidence="3">
    <location>
        <begin position="6"/>
        <end position="121"/>
    </location>
</feature>
<feature type="disulfide bond" evidence="3">
    <location>
        <begin position="28"/>
        <end position="112"/>
    </location>
</feature>
<feature type="disulfide bond" evidence="3">
    <location>
        <begin position="61"/>
        <end position="77"/>
    </location>
</feature>
<feature type="disulfide bond" evidence="3">
    <location>
        <begin position="73"/>
        <end position="91"/>
    </location>
</feature>
<keyword id="KW-0106">Calcium</keyword>
<keyword id="KW-0903">Direct protein sequencing</keyword>
<keyword id="KW-1015">Disulfide bond</keyword>
<keyword id="KW-0325">Glycoprotein</keyword>
<keyword id="KW-0422">Lactose biosynthesis</keyword>
<keyword id="KW-0479">Metal-binding</keyword>
<keyword id="KW-0494">Milk protein</keyword>
<keyword id="KW-0964">Secreted</keyword>
<gene>
    <name type="primary">LALBA</name>
</gene>
<organism>
    <name type="scientific">Notamacropus rufogriseus</name>
    <name type="common">Red-necked wallaby</name>
    <name type="synonym">Macropus rufogriseus</name>
    <dbReference type="NCBI Taxonomy" id="1960652"/>
    <lineage>
        <taxon>Eukaryota</taxon>
        <taxon>Metazoa</taxon>
        <taxon>Chordata</taxon>
        <taxon>Craniata</taxon>
        <taxon>Vertebrata</taxon>
        <taxon>Euteleostomi</taxon>
        <taxon>Mammalia</taxon>
        <taxon>Metatheria</taxon>
        <taxon>Diprotodontia</taxon>
        <taxon>Macropodidae</taxon>
        <taxon>Notamacropus</taxon>
    </lineage>
</organism>
<accession>P07458</accession>
<reference key="1">
    <citation type="journal article" date="1984" name="J. Biol. Chem.">
        <title>Evolution of alpha-lactalbumins. The complete amino acid sequence of the alpha-lactalbumin from a marsupial (Macropus rufogriseus) and corrections to regions of sequence in bovine and goat alpha-lactalbumins.</title>
        <authorList>
            <person name="Shewale J.G."/>
            <person name="Sinha S.K."/>
            <person name="Brew K."/>
        </authorList>
    </citation>
    <scope>PROTEIN SEQUENCE</scope>
</reference>
<comment type="function">
    <text>Regulatory subunit of lactose synthase, changes the substrate specificity of galactosyltransferase in the mammary gland making glucose a good acceptor substrate for this enzyme. This enables LS to synthesize lactose, the major carbohydrate component of milk. In other tissues, galactosyltransferase transfers galactose onto the N-acetylglucosamine of the oligosaccharide chains in glycoproteins.</text>
</comment>
<comment type="subunit">
    <text>Lactose synthase (LS) is a heterodimer of a catalytic component, beta1,4-galactosyltransferase (beta4Gal-T1) and a regulatory component, alpha-lactalbumin (LA).</text>
</comment>
<comment type="subcellular location">
    <subcellularLocation>
        <location>Secreted</location>
    </subcellularLocation>
</comment>
<comment type="tissue specificity">
    <text>Mammary gland specific. Secreted in milk.</text>
</comment>
<comment type="similarity">
    <text evidence="3">Belongs to the glycosyl hydrolase 22 family.</text>
</comment>
<proteinExistence type="evidence at protein level"/>
<evidence type="ECO:0000250" key="1">
    <source>
        <dbReference type="UniProtKB" id="P00711"/>
    </source>
</evidence>
<evidence type="ECO:0000255" key="2"/>
<evidence type="ECO:0000255" key="3">
    <source>
        <dbReference type="PROSITE-ProRule" id="PRU00680"/>
    </source>
</evidence>
<dbReference type="PIR" id="A25251">
    <property type="entry name" value="LAKGAW"/>
</dbReference>
<dbReference type="SMR" id="P07458"/>
<dbReference type="GlyCosmos" id="P07458">
    <property type="glycosylation" value="1 site, No reported glycans"/>
</dbReference>
<dbReference type="GO" id="GO:0005576">
    <property type="term" value="C:extracellular region"/>
    <property type="evidence" value="ECO:0007669"/>
    <property type="project" value="UniProtKB-SubCell"/>
</dbReference>
<dbReference type="GO" id="GO:0005509">
    <property type="term" value="F:calcium ion binding"/>
    <property type="evidence" value="ECO:0007669"/>
    <property type="project" value="InterPro"/>
</dbReference>
<dbReference type="GO" id="GO:0004461">
    <property type="term" value="F:lactose synthase activity"/>
    <property type="evidence" value="ECO:0007669"/>
    <property type="project" value="InterPro"/>
</dbReference>
<dbReference type="GO" id="GO:0003796">
    <property type="term" value="F:lysozyme activity"/>
    <property type="evidence" value="ECO:0007669"/>
    <property type="project" value="TreeGrafter"/>
</dbReference>
<dbReference type="GO" id="GO:0050829">
    <property type="term" value="P:defense response to Gram-negative bacterium"/>
    <property type="evidence" value="ECO:0007669"/>
    <property type="project" value="TreeGrafter"/>
</dbReference>
<dbReference type="GO" id="GO:0050830">
    <property type="term" value="P:defense response to Gram-positive bacterium"/>
    <property type="evidence" value="ECO:0007669"/>
    <property type="project" value="TreeGrafter"/>
</dbReference>
<dbReference type="GO" id="GO:0005989">
    <property type="term" value="P:lactose biosynthetic process"/>
    <property type="evidence" value="ECO:0007669"/>
    <property type="project" value="UniProtKB-KW"/>
</dbReference>
<dbReference type="CDD" id="cd16898">
    <property type="entry name" value="LYZ_LA"/>
    <property type="match status" value="1"/>
</dbReference>
<dbReference type="Gene3D" id="1.10.530.10">
    <property type="match status" value="1"/>
</dbReference>
<dbReference type="InterPro" id="IPR001916">
    <property type="entry name" value="Glyco_hydro_22"/>
</dbReference>
<dbReference type="InterPro" id="IPR019799">
    <property type="entry name" value="Glyco_hydro_22_CS"/>
</dbReference>
<dbReference type="InterPro" id="IPR000545">
    <property type="entry name" value="Lactalbumin"/>
</dbReference>
<dbReference type="InterPro" id="IPR023346">
    <property type="entry name" value="Lysozyme-like_dom_sf"/>
</dbReference>
<dbReference type="PANTHER" id="PTHR11407:SF32">
    <property type="entry name" value="ALPHA-LACTALBUMIN"/>
    <property type="match status" value="1"/>
</dbReference>
<dbReference type="PANTHER" id="PTHR11407">
    <property type="entry name" value="LYSOZYME C"/>
    <property type="match status" value="1"/>
</dbReference>
<dbReference type="Pfam" id="PF00062">
    <property type="entry name" value="Lys"/>
    <property type="match status" value="1"/>
</dbReference>
<dbReference type="PRINTS" id="PR00136">
    <property type="entry name" value="LACTALBUMIN"/>
</dbReference>
<dbReference type="PRINTS" id="PR00135">
    <property type="entry name" value="LYZLACT"/>
</dbReference>
<dbReference type="SMART" id="SM00263">
    <property type="entry name" value="LYZ1"/>
    <property type="match status" value="1"/>
</dbReference>
<dbReference type="SUPFAM" id="SSF53955">
    <property type="entry name" value="Lysozyme-like"/>
    <property type="match status" value="1"/>
</dbReference>
<dbReference type="PROSITE" id="PS00128">
    <property type="entry name" value="GLYCOSYL_HYDROL_F22_1"/>
    <property type="match status" value="1"/>
</dbReference>
<dbReference type="PROSITE" id="PS51348">
    <property type="entry name" value="GLYCOSYL_HYDROL_F22_2"/>
    <property type="match status" value="1"/>
</dbReference>
<protein>
    <recommendedName>
        <fullName>Alpha-lactalbumin</fullName>
    </recommendedName>
    <alternativeName>
        <fullName>Lactose synthase B protein</fullName>
    </alternativeName>
</protein>
<sequence length="121" mass="13785">IDYRKCQASQILKEHGMDKVIPLPELVCTMFHISGLSTQAEVNNHSNKEYGIFQISNDGWCAEKQEDVANSVCGILCSKFLDDDITDDIECAKKILQLPEGLGYWKAHETFCLEDLDQWRC</sequence>